<accession>Q5R4D4</accession>
<feature type="initiator methionine" description="Removed" evidence="2">
    <location>
        <position position="1"/>
    </location>
</feature>
<feature type="chain" id="PRO_0000236210" description="Nucleosome assembly protein 1-like 1">
    <location>
        <begin position="2"/>
        <end position="388"/>
    </location>
</feature>
<feature type="propeptide" id="PRO_0000396687" description="Removed in mature form" evidence="2">
    <location>
        <begin position="389"/>
        <end position="391"/>
    </location>
</feature>
<feature type="region of interest" description="Disordered" evidence="4">
    <location>
        <begin position="1"/>
        <end position="32"/>
    </location>
</feature>
<feature type="region of interest" description="Disordered" evidence="4">
    <location>
        <begin position="132"/>
        <end position="163"/>
    </location>
</feature>
<feature type="region of interest" description="Disordered" evidence="4">
    <location>
        <begin position="346"/>
        <end position="391"/>
    </location>
</feature>
<feature type="short sequence motif" description="NAP1L motif" evidence="2">
    <location>
        <begin position="125"/>
        <end position="150"/>
    </location>
</feature>
<feature type="short sequence motif" description="Nuclear localization signal" evidence="3">
    <location>
        <begin position="273"/>
        <end position="279"/>
    </location>
</feature>
<feature type="compositionally biased region" description="Basic and acidic residues" evidence="4">
    <location>
        <begin position="1"/>
        <end position="10"/>
    </location>
</feature>
<feature type="compositionally biased region" description="Acidic residues" evidence="4">
    <location>
        <begin position="11"/>
        <end position="28"/>
    </location>
</feature>
<feature type="compositionally biased region" description="Acidic residues" evidence="4">
    <location>
        <begin position="132"/>
        <end position="143"/>
    </location>
</feature>
<feature type="compositionally biased region" description="Basic and acidic residues" evidence="4">
    <location>
        <begin position="144"/>
        <end position="163"/>
    </location>
</feature>
<feature type="compositionally biased region" description="Acidic residues" evidence="4">
    <location>
        <begin position="346"/>
        <end position="376"/>
    </location>
</feature>
<feature type="compositionally biased region" description="Basic and acidic residues" evidence="4">
    <location>
        <begin position="377"/>
        <end position="391"/>
    </location>
</feature>
<feature type="modified residue" description="N-acetylalanine" evidence="2">
    <location>
        <position position="2"/>
    </location>
</feature>
<feature type="modified residue" description="Phosphoserine" evidence="2">
    <location>
        <position position="10"/>
    </location>
</feature>
<feature type="modified residue" description="Phosphothreonine" evidence="2">
    <location>
        <position position="62"/>
    </location>
</feature>
<feature type="modified residue" description="Phosphothreonine" evidence="1">
    <location>
        <position position="64"/>
    </location>
</feature>
<feature type="modified residue" description="Phosphoserine" evidence="2">
    <location>
        <position position="69"/>
    </location>
</feature>
<feature type="modified residue" description="N6-acetyllysine" evidence="2">
    <location>
        <position position="116"/>
    </location>
</feature>
<feature type="modified residue" description="Phosphoserine" evidence="2">
    <location>
        <position position="143"/>
    </location>
</feature>
<feature type="modified residue" description="5-glutamyl polyglycine" evidence="1">
    <location>
        <position position="359"/>
    </location>
</feature>
<feature type="modified residue" description="5-glutamyl polyglycine" evidence="1">
    <location>
        <position position="360"/>
    </location>
</feature>
<feature type="modified residue" description="Cysteine methyl ester" evidence="5">
    <location>
        <position position="388"/>
    </location>
</feature>
<feature type="lipid moiety-binding region" description="S-farnesyl cysteine" evidence="2">
    <location>
        <position position="388"/>
    </location>
</feature>
<dbReference type="EMBL" id="CR861317">
    <property type="protein sequence ID" value="CAH93382.1"/>
    <property type="molecule type" value="mRNA"/>
</dbReference>
<dbReference type="RefSeq" id="NP_001126986.1">
    <property type="nucleotide sequence ID" value="NM_001133514.1"/>
</dbReference>
<dbReference type="SMR" id="Q5R4D4"/>
<dbReference type="STRING" id="9601.ENSPPYP00000005453"/>
<dbReference type="GeneID" id="100174009"/>
<dbReference type="KEGG" id="pon:100174009"/>
<dbReference type="CTD" id="4673"/>
<dbReference type="eggNOG" id="KOG1507">
    <property type="taxonomic scope" value="Eukaryota"/>
</dbReference>
<dbReference type="InParanoid" id="Q5R4D4"/>
<dbReference type="OrthoDB" id="27325at2759"/>
<dbReference type="Proteomes" id="UP000001595">
    <property type="component" value="Unplaced"/>
</dbReference>
<dbReference type="GO" id="GO:0005737">
    <property type="term" value="C:cytoplasm"/>
    <property type="evidence" value="ECO:0000250"/>
    <property type="project" value="UniProtKB"/>
</dbReference>
<dbReference type="GO" id="GO:0042470">
    <property type="term" value="C:melanosome"/>
    <property type="evidence" value="ECO:0007669"/>
    <property type="project" value="UniProtKB-SubCell"/>
</dbReference>
<dbReference type="GO" id="GO:0005634">
    <property type="term" value="C:nucleus"/>
    <property type="evidence" value="ECO:0000250"/>
    <property type="project" value="UniProtKB"/>
</dbReference>
<dbReference type="GO" id="GO:0007399">
    <property type="term" value="P:nervous system development"/>
    <property type="evidence" value="ECO:0007669"/>
    <property type="project" value="UniProtKB-KW"/>
</dbReference>
<dbReference type="GO" id="GO:0006334">
    <property type="term" value="P:nucleosome assembly"/>
    <property type="evidence" value="ECO:0007669"/>
    <property type="project" value="InterPro"/>
</dbReference>
<dbReference type="GO" id="GO:2000179">
    <property type="term" value="P:positive regulation of neural precursor cell proliferation"/>
    <property type="evidence" value="ECO:0000250"/>
    <property type="project" value="UniProtKB"/>
</dbReference>
<dbReference type="GO" id="GO:0050769">
    <property type="term" value="P:positive regulation of neurogenesis"/>
    <property type="evidence" value="ECO:0000250"/>
    <property type="project" value="UniProtKB"/>
</dbReference>
<dbReference type="FunFam" id="1.20.5.1500:FF:000001">
    <property type="entry name" value="Nucleosome assembly protein 1-like 1"/>
    <property type="match status" value="1"/>
</dbReference>
<dbReference type="FunFam" id="3.30.1120.90:FF:000001">
    <property type="entry name" value="Nucleosome assembly protein 1-like 1"/>
    <property type="match status" value="1"/>
</dbReference>
<dbReference type="Gene3D" id="1.20.5.1500">
    <property type="match status" value="1"/>
</dbReference>
<dbReference type="Gene3D" id="3.30.1120.90">
    <property type="entry name" value="Nucleosome assembly protein"/>
    <property type="match status" value="1"/>
</dbReference>
<dbReference type="InterPro" id="IPR037231">
    <property type="entry name" value="NAP-like_sf"/>
</dbReference>
<dbReference type="InterPro" id="IPR002164">
    <property type="entry name" value="NAP_family"/>
</dbReference>
<dbReference type="PANTHER" id="PTHR11875">
    <property type="entry name" value="TESTIS-SPECIFIC Y-ENCODED PROTEIN"/>
    <property type="match status" value="1"/>
</dbReference>
<dbReference type="Pfam" id="PF00956">
    <property type="entry name" value="NAP"/>
    <property type="match status" value="1"/>
</dbReference>
<dbReference type="SUPFAM" id="SSF143113">
    <property type="entry name" value="NAP-like"/>
    <property type="match status" value="1"/>
</dbReference>
<organism>
    <name type="scientific">Pongo abelii</name>
    <name type="common">Sumatran orangutan</name>
    <name type="synonym">Pongo pygmaeus abelii</name>
    <dbReference type="NCBI Taxonomy" id="9601"/>
    <lineage>
        <taxon>Eukaryota</taxon>
        <taxon>Metazoa</taxon>
        <taxon>Chordata</taxon>
        <taxon>Craniata</taxon>
        <taxon>Vertebrata</taxon>
        <taxon>Euteleostomi</taxon>
        <taxon>Mammalia</taxon>
        <taxon>Eutheria</taxon>
        <taxon>Euarchontoglires</taxon>
        <taxon>Primates</taxon>
        <taxon>Haplorrhini</taxon>
        <taxon>Catarrhini</taxon>
        <taxon>Hominidae</taxon>
        <taxon>Pongo</taxon>
    </lineage>
</organism>
<reference key="1">
    <citation type="submission" date="2004-11" db="EMBL/GenBank/DDBJ databases">
        <authorList>
            <consortium name="The German cDNA consortium"/>
        </authorList>
    </citation>
    <scope>NUCLEOTIDE SEQUENCE [LARGE SCALE MRNA]</scope>
    <source>
        <tissue>Brain cortex</tissue>
    </source>
</reference>
<keyword id="KW-0007">Acetylation</keyword>
<keyword id="KW-0963">Cytoplasm</keyword>
<keyword id="KW-1017">Isopeptide bond</keyword>
<keyword id="KW-0449">Lipoprotein</keyword>
<keyword id="KW-0488">Methylation</keyword>
<keyword id="KW-0524">Neurogenesis</keyword>
<keyword id="KW-0539">Nucleus</keyword>
<keyword id="KW-0597">Phosphoprotein</keyword>
<keyword id="KW-0636">Prenylation</keyword>
<keyword id="KW-1185">Reference proteome</keyword>
<protein>
    <recommendedName>
        <fullName>Nucleosome assembly protein 1-like 1</fullName>
    </recommendedName>
</protein>
<comment type="function">
    <text evidence="1 2">Histone chaperone that plays a role in the nuclear import of H2A-H2B and nucleosome assembly. Also participates in several important DNA repair mechanisms: greatly enhances ERCC6-mediated chromatin remodeling which is essential for transcription-coupled nucleotide excision DNA repair. Also stimulates homologous recombination (HR) by RAD51 and RAD54 which is essential in mitotic DNA double strand break (DSB) repair (By similarity). Plays a key role in the regulation of embryonic neurogenesis (By similarity). Promotes the proliferation of neural progenitors and inhibits neuronal differentiation during cortical development (By similarity). Regulates neurogenesis via the modulation of RASSF10; regulates RASSF10 expression by promoting SETD1A-mediated H3K4 methylation at the RASSF10 promoter (By similarity).</text>
</comment>
<comment type="subunit">
    <text evidence="1 2">Homodimer. The dimer binds strongly and sequentially to single and double H2A-H2B heterodimers. Interacts with ERCC6; this interaction increases ERCC6 processivity. Interacts with RAD54 (By similarity). Interacts with SETD1A (By similarity).</text>
</comment>
<comment type="subcellular location">
    <subcellularLocation>
        <location evidence="1">Nucleus</location>
    </subcellularLocation>
    <subcellularLocation>
        <location evidence="2">Melanosome</location>
    </subcellularLocation>
    <subcellularLocation>
        <location evidence="1">Cytoplasm</location>
    </subcellularLocation>
</comment>
<comment type="domain">
    <text evidence="2">The NAP1L motif is required for the histone chaperone activity.</text>
</comment>
<comment type="domain">
    <text evidence="2">The acidic domains are probably involved in the interaction with histones.</text>
</comment>
<comment type="PTM">
    <text evidence="1">Polyglycylated by TTLL10 on glutamate residues, resulting in polyglycine chains on the gamma-carboxyl group. Both polyglutamylation and polyglycylation modifications can coexist on the same protein on adjacent residues, and lowering polyglycylation levels increases polyglutamylation, and reciprocally.</text>
</comment>
<comment type="PTM">
    <text evidence="1">Polyglutamylated by TTLL4 on glutamate residues, resulting in polyglutamate chains on the gamma-carboxyl group. Both polyglutamylation and polyglycylation modifications can coexist on the same protein on adjacent residues, and lowering polyglycylation levels increases polyglutamylation, and reciprocally.</text>
</comment>
<comment type="similarity">
    <text evidence="5">Belongs to the nucleosome assembly protein (NAP) family.</text>
</comment>
<evidence type="ECO:0000250" key="1">
    <source>
        <dbReference type="UniProtKB" id="P28656"/>
    </source>
</evidence>
<evidence type="ECO:0000250" key="2">
    <source>
        <dbReference type="UniProtKB" id="P55209"/>
    </source>
</evidence>
<evidence type="ECO:0000255" key="3"/>
<evidence type="ECO:0000256" key="4">
    <source>
        <dbReference type="SAM" id="MobiDB-lite"/>
    </source>
</evidence>
<evidence type="ECO:0000305" key="5"/>
<sequence length="391" mass="45316">MADIDNKEQSELDQDLDDVEEVEEEETGEETKIKARQLTVQMMQNPQILAALQERLDGLVETPTGYIESLPRVVKRRVNALKNLQVKCAQIEAKFYEEVHDLERKYAVLYQPLFDKRFEIINAIYEPTEEECEWKPDEEDEISEELKEKAKIEDEKKDEEKEDPKGIPEFWLTVFKNVDLLSDMVQEHDEPILKHLKDIKVKFSGAGQPMSFVLEFHFEPNEYFTNEVLTKTYRMRSEPDDSDPFSFDGPEIMGCTGCQIDWKKGKNVTLKTIKKKQKHKGRGTVRTVTKTVSNDSFFNFFAPPEVPESGDLDDDAEAILAADFEIGHFLRERIIPRSVLYFTGEAIEDDDDDYDEEGEEADEEGEEEGDEENDPDYDPKKDQNPAECKQQ</sequence>
<gene>
    <name type="primary">NAP1L1</name>
</gene>
<name>NP1L1_PONAB</name>
<proteinExistence type="evidence at transcript level"/>